<reference key="1">
    <citation type="journal article" date="2008" name="J. Bacteriol.">
        <title>The complete genome sequence of Escherichia coli DH10B: insights into the biology of a laboratory workhorse.</title>
        <authorList>
            <person name="Durfee T."/>
            <person name="Nelson R."/>
            <person name="Baldwin S."/>
            <person name="Plunkett G. III"/>
            <person name="Burland V."/>
            <person name="Mau B."/>
            <person name="Petrosino J.F."/>
            <person name="Qin X."/>
            <person name="Muzny D.M."/>
            <person name="Ayele M."/>
            <person name="Gibbs R.A."/>
            <person name="Csorgo B."/>
            <person name="Posfai G."/>
            <person name="Weinstock G.M."/>
            <person name="Blattner F.R."/>
        </authorList>
    </citation>
    <scope>NUCLEOTIDE SEQUENCE [LARGE SCALE GENOMIC DNA]</scope>
    <source>
        <strain>K12 / DH10B</strain>
    </source>
</reference>
<accession>B1XG54</accession>
<dbReference type="EMBL" id="CP000948">
    <property type="protein sequence ID" value="ACB04134.1"/>
    <property type="molecule type" value="Genomic_DNA"/>
</dbReference>
<dbReference type="RefSeq" id="WP_000350095.1">
    <property type="nucleotide sequence ID" value="NC_010473.1"/>
</dbReference>
<dbReference type="BMRB" id="B1XG54"/>
<dbReference type="SMR" id="B1XG54"/>
<dbReference type="GeneID" id="93778946"/>
<dbReference type="KEGG" id="ecd:ECDH10B_3223"/>
<dbReference type="HOGENOM" id="CLU_185971_0_0_6"/>
<dbReference type="GO" id="GO:1902201">
    <property type="term" value="P:negative regulation of bacterial-type flagellum-dependent cell motility"/>
    <property type="evidence" value="ECO:0007669"/>
    <property type="project" value="UniProtKB-UniRule"/>
</dbReference>
<dbReference type="GO" id="GO:1900191">
    <property type="term" value="P:negative regulation of single-species biofilm formation"/>
    <property type="evidence" value="ECO:0007669"/>
    <property type="project" value="UniProtKB-UniRule"/>
</dbReference>
<dbReference type="FunFam" id="1.20.970.20:FF:000001">
    <property type="entry name" value="Surface composition regulator"/>
    <property type="match status" value="1"/>
</dbReference>
<dbReference type="Gene3D" id="1.20.970.20">
    <property type="entry name" value="Glycogen synthesis protein GlgS"/>
    <property type="match status" value="1"/>
</dbReference>
<dbReference type="HAMAP" id="MF_00525">
    <property type="entry name" value="GlgS"/>
    <property type="match status" value="1"/>
</dbReference>
<dbReference type="InterPro" id="IPR015065">
    <property type="entry name" value="GlgS"/>
</dbReference>
<dbReference type="InterPro" id="IPR036295">
    <property type="entry name" value="GlgS_sf"/>
</dbReference>
<dbReference type="NCBIfam" id="NF002793">
    <property type="entry name" value="PRK02922.1"/>
    <property type="match status" value="1"/>
</dbReference>
<dbReference type="Pfam" id="PF08971">
    <property type="entry name" value="GlgS"/>
    <property type="match status" value="1"/>
</dbReference>
<dbReference type="SUPFAM" id="SSF109747">
    <property type="entry name" value="Glycogen synthesis protein GlgS"/>
    <property type="match status" value="1"/>
</dbReference>
<proteinExistence type="inferred from homology"/>
<evidence type="ECO:0000255" key="1">
    <source>
        <dbReference type="HAMAP-Rule" id="MF_00525"/>
    </source>
</evidence>
<gene>
    <name evidence="1" type="primary">glgS</name>
    <name type="ordered locus">ECDH10B_3223</name>
</gene>
<feature type="chain" id="PRO_1000127738" description="Surface composition regulator">
    <location>
        <begin position="1"/>
        <end position="66"/>
    </location>
</feature>
<comment type="function">
    <text evidence="1">Major determinant of cell surface composition. Negatively regulates motility, adhesion and synthesis of biofilm exopolysaccharides.</text>
</comment>
<comment type="similarity">
    <text evidence="1">Belongs to the GlgS family.</text>
</comment>
<organism>
    <name type="scientific">Escherichia coli (strain K12 / DH10B)</name>
    <dbReference type="NCBI Taxonomy" id="316385"/>
    <lineage>
        <taxon>Bacteria</taxon>
        <taxon>Pseudomonadati</taxon>
        <taxon>Pseudomonadota</taxon>
        <taxon>Gammaproteobacteria</taxon>
        <taxon>Enterobacterales</taxon>
        <taxon>Enterobacteriaceae</taxon>
        <taxon>Escherichia</taxon>
    </lineage>
</organism>
<sequence length="66" mass="7892">MDHSLNSLNNFDFLARSFARMHAEGRPVDILAVTGNMDEEHRTWFCARYAWYCQQMMQARELELEH</sequence>
<protein>
    <recommendedName>
        <fullName evidence="1">Surface composition regulator</fullName>
    </recommendedName>
</protein>
<name>GLGS_ECODH</name>